<keyword id="KW-0456">Lyase</keyword>
<keyword id="KW-0460">Magnesium</keyword>
<keyword id="KW-0464">Manganese</keyword>
<keyword id="KW-0479">Metal-binding</keyword>
<dbReference type="EC" id="4.2.3.23"/>
<dbReference type="EMBL" id="JQ255377">
    <property type="protein sequence ID" value="AFM43736.1"/>
    <property type="molecule type" value="mRNA"/>
</dbReference>
<dbReference type="SMR" id="I6QSN0"/>
<dbReference type="UniPathway" id="UPA00213"/>
<dbReference type="GO" id="GO:0034005">
    <property type="term" value="F:germacrene-A synthase activity"/>
    <property type="evidence" value="ECO:0007669"/>
    <property type="project" value="UniProtKB-EC"/>
</dbReference>
<dbReference type="GO" id="GO:0000287">
    <property type="term" value="F:magnesium ion binding"/>
    <property type="evidence" value="ECO:0007669"/>
    <property type="project" value="InterPro"/>
</dbReference>
<dbReference type="GO" id="GO:0016102">
    <property type="term" value="P:diterpenoid biosynthetic process"/>
    <property type="evidence" value="ECO:0007669"/>
    <property type="project" value="InterPro"/>
</dbReference>
<dbReference type="CDD" id="cd00684">
    <property type="entry name" value="Terpene_cyclase_plant_C1"/>
    <property type="match status" value="1"/>
</dbReference>
<dbReference type="FunFam" id="1.10.600.10:FF:000007">
    <property type="entry name" value="Isoprene synthase, chloroplastic"/>
    <property type="match status" value="1"/>
</dbReference>
<dbReference type="FunFam" id="1.50.10.130:FF:000001">
    <property type="entry name" value="Isoprene synthase, chloroplastic"/>
    <property type="match status" value="1"/>
</dbReference>
<dbReference type="Gene3D" id="1.10.600.10">
    <property type="entry name" value="Farnesyl Diphosphate Synthase"/>
    <property type="match status" value="1"/>
</dbReference>
<dbReference type="Gene3D" id="1.50.10.130">
    <property type="entry name" value="Terpene synthase, N-terminal domain"/>
    <property type="match status" value="1"/>
</dbReference>
<dbReference type="InterPro" id="IPR008949">
    <property type="entry name" value="Isoprenoid_synthase_dom_sf"/>
</dbReference>
<dbReference type="InterPro" id="IPR034741">
    <property type="entry name" value="Terpene_cyclase-like_1_C"/>
</dbReference>
<dbReference type="InterPro" id="IPR044814">
    <property type="entry name" value="Terpene_cyclase_plant_C1"/>
</dbReference>
<dbReference type="InterPro" id="IPR001906">
    <property type="entry name" value="Terpene_synth_N"/>
</dbReference>
<dbReference type="InterPro" id="IPR036965">
    <property type="entry name" value="Terpene_synth_N_sf"/>
</dbReference>
<dbReference type="InterPro" id="IPR050148">
    <property type="entry name" value="Terpene_synthase-like"/>
</dbReference>
<dbReference type="InterPro" id="IPR005630">
    <property type="entry name" value="Terpene_synthase_metal-bd"/>
</dbReference>
<dbReference type="InterPro" id="IPR008930">
    <property type="entry name" value="Terpenoid_cyclase/PrenylTrfase"/>
</dbReference>
<dbReference type="PANTHER" id="PTHR31225:SF120">
    <property type="entry name" value="GERMACRENE-A SYNTHASE"/>
    <property type="match status" value="1"/>
</dbReference>
<dbReference type="PANTHER" id="PTHR31225">
    <property type="entry name" value="OS04G0344100 PROTEIN-RELATED"/>
    <property type="match status" value="1"/>
</dbReference>
<dbReference type="Pfam" id="PF01397">
    <property type="entry name" value="Terpene_synth"/>
    <property type="match status" value="1"/>
</dbReference>
<dbReference type="Pfam" id="PF03936">
    <property type="entry name" value="Terpene_synth_C"/>
    <property type="match status" value="1"/>
</dbReference>
<dbReference type="SFLD" id="SFLDS00005">
    <property type="entry name" value="Isoprenoid_Synthase_Type_I"/>
    <property type="match status" value="1"/>
</dbReference>
<dbReference type="SFLD" id="SFLDG01019">
    <property type="entry name" value="Terpene_Cyclase_Like_1_C_Termi"/>
    <property type="match status" value="1"/>
</dbReference>
<dbReference type="SUPFAM" id="SSF48239">
    <property type="entry name" value="Terpenoid cyclases/Protein prenyltransferases"/>
    <property type="match status" value="1"/>
</dbReference>
<dbReference type="SUPFAM" id="SSF48576">
    <property type="entry name" value="Terpenoid synthases"/>
    <property type="match status" value="1"/>
</dbReference>
<protein>
    <recommendedName>
        <fullName>Germacrene-A synthase</fullName>
        <ecNumber>4.2.3.23</ecNumber>
    </recommendedName>
    <alternativeName>
        <fullName>Terpene synthase 3</fullName>
    </alternativeName>
</protein>
<evidence type="ECO:0000250" key="1"/>
<evidence type="ECO:0000269" key="2">
    <source>
    </source>
</evidence>
<evidence type="ECO:0000305" key="3"/>
<sequence>MAAIQANVTTGIPANANTITSSEPVRPLANFPPSVWGDRFLSFSLDKSELERHAIAMEKPKEDLRKLIVDPTMDSNEKLGLIYSVHRLGLTYMFMKEIESQLDKLFKEFSLQDCEEVDLYTISINFQVFRHLGYKLPSDVFNKFKDASSGTFRESITRDVKGMLGLYESAQLRTRGEKVLDEASVFIEGKLKSVVSTLEGNLAQQVKQSLRRPFHQGMPMIEARLYFSNYEEECSSHDSLFKLAKLHFKYLELQQKEELRIVTKWWKDMRFQETTPYIRDRVPEIYLWILGLYFEPRYSLARIIATKITLFLVVLDDTYDAYATIEEIRLLTDAINKWDISAMEQIPEYIRPFYKILLDEYAEIENIMAREGRANTVIASKEAFQDIARGYLEEAEWTNNGYVASFPEYMKNGLITSAYNVISKSALVGMGEIVSEDALAWYESHLKTLQASELISRLQDDVMTYQFERERGQSATGVDAFIKTYGVSEKKAIDELKIMIENAWKDINEGCLKPRQVSMDLLAPILNLARMIDVVYRYDDGFTFPGKTLKEYINLLFVGSLPM</sequence>
<reference key="1">
    <citation type="journal article" date="2012" name="BMC Plant Biol.">
        <title>The organ-specific expression of terpene synthase genes contributes to the terpene hydrocarbon composition of chamomile essential oils.</title>
        <authorList>
            <person name="Irmisch S."/>
            <person name="Krause S.T."/>
            <person name="Kunert G."/>
            <person name="Gershenzon J."/>
            <person name="Degenhardt J."/>
            <person name="Koellner T.G."/>
        </authorList>
    </citation>
    <scope>NUCLEOTIDE SEQUENCE [MRNA]</scope>
    <scope>FUNCTION</scope>
    <scope>CATALYTIC ACTIVITY</scope>
    <scope>TISSUE SPECIFICITY</scope>
    <source>
        <strain>cv. Bodegold</strain>
    </source>
</reference>
<accession>I6QSN0</accession>
<comment type="function">
    <text evidence="2">Sesquiterpene synthase involved in germacrene A biosynthesis. May be involved in the biosynthesis of the sesquiterpene lactone matricine, one of the major active compounds of chamomile flowers.</text>
</comment>
<comment type="catalytic activity">
    <reaction evidence="2">
        <text>(2E,6E)-farnesyl diphosphate = (+)-(R)-germacrene A + diphosphate</text>
        <dbReference type="Rhea" id="RHEA:12516"/>
        <dbReference type="ChEBI" id="CHEBI:33019"/>
        <dbReference type="ChEBI" id="CHEBI:41595"/>
        <dbReference type="ChEBI" id="CHEBI:175763"/>
        <dbReference type="EC" id="4.2.3.23"/>
    </reaction>
</comment>
<comment type="cofactor">
    <cofactor evidence="1">
        <name>Mg(2+)</name>
        <dbReference type="ChEBI" id="CHEBI:18420"/>
    </cofactor>
    <cofactor evidence="1">
        <name>Mn(2+)</name>
        <dbReference type="ChEBI" id="CHEBI:29035"/>
    </cofactor>
    <text evidence="1">Binds 3 Mg(2+) or Mn(2+) ions per subunit.</text>
</comment>
<comment type="pathway">
    <text>Secondary metabolite biosynthesis; terpenoid biosynthesis.</text>
</comment>
<comment type="tissue specificity">
    <text evidence="2">High expression in disk florets, moderate expression in ray florets and detected in leaves and stems, but not in roots.</text>
</comment>
<comment type="domain">
    <text evidence="1">The Asp-Asp-Xaa-Xaa-Asp/Glu (DDXXD/E) motif is important for the catalytic activity, presumably through binding to Mg(2+).</text>
</comment>
<comment type="similarity">
    <text evidence="3">Belongs to the terpene synthase family. Tpsa subfamily.</text>
</comment>
<organism>
    <name type="scientific">Matricaria chamomilla var. recutita</name>
    <name type="common">German chamomile</name>
    <name type="synonym">Chamomilla recutita</name>
    <dbReference type="NCBI Taxonomy" id="127986"/>
    <lineage>
        <taxon>Eukaryota</taxon>
        <taxon>Viridiplantae</taxon>
        <taxon>Streptophyta</taxon>
        <taxon>Embryophyta</taxon>
        <taxon>Tracheophyta</taxon>
        <taxon>Spermatophyta</taxon>
        <taxon>Magnoliopsida</taxon>
        <taxon>eudicotyledons</taxon>
        <taxon>Gunneridae</taxon>
        <taxon>Pentapetalae</taxon>
        <taxon>asterids</taxon>
        <taxon>campanulids</taxon>
        <taxon>Asterales</taxon>
        <taxon>Asteraceae</taxon>
        <taxon>Asteroideae</taxon>
        <taxon>Anthemideae</taxon>
        <taxon>Matricariinae</taxon>
        <taxon>Matricaria</taxon>
    </lineage>
</organism>
<feature type="chain" id="PRO_0000421927" description="Germacrene-A synthase">
    <location>
        <begin position="1"/>
        <end position="563"/>
    </location>
</feature>
<feature type="short sequence motif" description="DDXXD motif">
    <location>
        <begin position="316"/>
        <end position="320"/>
    </location>
</feature>
<feature type="binding site" evidence="1">
    <location>
        <position position="316"/>
    </location>
    <ligand>
        <name>Mg(2+)</name>
        <dbReference type="ChEBI" id="CHEBI:18420"/>
        <label>1</label>
    </ligand>
</feature>
<feature type="binding site" evidence="1">
    <location>
        <position position="316"/>
    </location>
    <ligand>
        <name>Mg(2+)</name>
        <dbReference type="ChEBI" id="CHEBI:18420"/>
        <label>2</label>
    </ligand>
</feature>
<feature type="binding site" evidence="1">
    <location>
        <position position="320"/>
    </location>
    <ligand>
        <name>Mg(2+)</name>
        <dbReference type="ChEBI" id="CHEBI:18420"/>
        <label>1</label>
    </ligand>
</feature>
<feature type="binding site" evidence="1">
    <location>
        <position position="320"/>
    </location>
    <ligand>
        <name>Mg(2+)</name>
        <dbReference type="ChEBI" id="CHEBI:18420"/>
        <label>2</label>
    </ligand>
</feature>
<feature type="binding site" evidence="1">
    <location>
        <position position="460"/>
    </location>
    <ligand>
        <name>Mg(2+)</name>
        <dbReference type="ChEBI" id="CHEBI:18420"/>
        <label>3</label>
    </ligand>
</feature>
<feature type="binding site" evidence="1">
    <location>
        <position position="464"/>
    </location>
    <ligand>
        <name>Mg(2+)</name>
        <dbReference type="ChEBI" id="CHEBI:18420"/>
        <label>3</label>
    </ligand>
</feature>
<feature type="binding site" evidence="1">
    <location>
        <position position="468"/>
    </location>
    <ligand>
        <name>Mg(2+)</name>
        <dbReference type="ChEBI" id="CHEBI:18420"/>
        <label>3</label>
    </ligand>
</feature>
<proteinExistence type="evidence at protein level"/>
<name>TPS3_MATCR</name>